<name>INLPB_MYCBO</name>
<dbReference type="EMBL" id="LT708304">
    <property type="protein sequence ID" value="SIT98510.1"/>
    <property type="molecule type" value="Genomic_DNA"/>
</dbReference>
<dbReference type="RefSeq" id="NP_853771.1">
    <property type="nucleotide sequence ID" value="NC_002945.3"/>
</dbReference>
<dbReference type="RefSeq" id="WP_003400793.1">
    <property type="nucleotide sequence ID" value="NC_002945.4"/>
</dbReference>
<dbReference type="SMR" id="P64688"/>
<dbReference type="PATRIC" id="fig|233413.5.peg.115"/>
<dbReference type="UniPathway" id="UPA00199"/>
<dbReference type="Proteomes" id="UP000001419">
    <property type="component" value="Chromosome"/>
</dbReference>
<dbReference type="GO" id="GO:0006631">
    <property type="term" value="P:fatty acid metabolic process"/>
    <property type="evidence" value="ECO:0007669"/>
    <property type="project" value="UniProtKB-UniPathway"/>
</dbReference>
<dbReference type="Gene3D" id="1.10.1200.10">
    <property type="entry name" value="ACP-like"/>
    <property type="match status" value="1"/>
</dbReference>
<dbReference type="InterPro" id="IPR036736">
    <property type="entry name" value="ACP-like_sf"/>
</dbReference>
<dbReference type="InterPro" id="IPR009081">
    <property type="entry name" value="PP-bd_ACP"/>
</dbReference>
<dbReference type="Pfam" id="PF00550">
    <property type="entry name" value="PP-binding"/>
    <property type="match status" value="1"/>
</dbReference>
<dbReference type="SUPFAM" id="SSF47336">
    <property type="entry name" value="ACP-like"/>
    <property type="match status" value="1"/>
</dbReference>
<dbReference type="PROSITE" id="PS50075">
    <property type="entry name" value="CARRIER"/>
    <property type="match status" value="1"/>
</dbReference>
<protein>
    <recommendedName>
        <fullName evidence="1">Acyl carrier protein BQ2027_MB0103</fullName>
    </recommendedName>
</protein>
<sequence length="78" mass="8693">MRDRILAAVCDVLYIDEADLIDGDETDLRDLGLDSVRFVLLMKQLGVNRQSELPSRLAANPSIAGWLRELEAVCTEFG</sequence>
<organism>
    <name type="scientific">Mycobacterium bovis (strain ATCC BAA-935 / AF2122/97)</name>
    <dbReference type="NCBI Taxonomy" id="233413"/>
    <lineage>
        <taxon>Bacteria</taxon>
        <taxon>Bacillati</taxon>
        <taxon>Actinomycetota</taxon>
        <taxon>Actinomycetes</taxon>
        <taxon>Mycobacteriales</taxon>
        <taxon>Mycobacteriaceae</taxon>
        <taxon>Mycobacterium</taxon>
        <taxon>Mycobacterium tuberculosis complex</taxon>
    </lineage>
</organism>
<evidence type="ECO:0000250" key="1">
    <source>
        <dbReference type="UniProtKB" id="P9WM65"/>
    </source>
</evidence>
<evidence type="ECO:0000255" key="2">
    <source>
        <dbReference type="PROSITE-ProRule" id="PRU00258"/>
    </source>
</evidence>
<evidence type="ECO:0000305" key="3"/>
<proteinExistence type="inferred from homology"/>
<comment type="function">
    <text evidence="1">Acyl-carrier protein (ACP) involved in the biosynthesis of a unique class of isonitrile lipopeptides (INLPs) that seem to play a role in metal acquisition. Is the dedicated ACP for the loading of activated acyl groups catalyzed by FadD10.</text>
</comment>
<comment type="cofactor">
    <cofactor evidence="2">
        <name>pantetheine 4'-phosphate</name>
        <dbReference type="ChEBI" id="CHEBI:47942"/>
    </cofactor>
</comment>
<comment type="pathway">
    <text evidence="1">Lipid metabolism; fatty acid metabolism.</text>
</comment>
<comment type="similarity">
    <text evidence="3">Belongs to the acyl carrier protein (ACP) family.</text>
</comment>
<accession>P64688</accession>
<accession>A0A1R3XUA8</accession>
<accession>Q10895</accession>
<accession>X2BE11</accession>
<keyword id="KW-0276">Fatty acid metabolism</keyword>
<keyword id="KW-0443">Lipid metabolism</keyword>
<keyword id="KW-0596">Phosphopantetheine</keyword>
<keyword id="KW-0597">Phosphoprotein</keyword>
<keyword id="KW-1185">Reference proteome</keyword>
<gene>
    <name type="ordered locus">BQ2027_MB0103</name>
</gene>
<reference key="1">
    <citation type="journal article" date="2003" name="Proc. Natl. Acad. Sci. U.S.A.">
        <title>The complete genome sequence of Mycobacterium bovis.</title>
        <authorList>
            <person name="Garnier T."/>
            <person name="Eiglmeier K."/>
            <person name="Camus J.-C."/>
            <person name="Medina N."/>
            <person name="Mansoor H."/>
            <person name="Pryor M."/>
            <person name="Duthoy S."/>
            <person name="Grondin S."/>
            <person name="Lacroix C."/>
            <person name="Monsempe C."/>
            <person name="Simon S."/>
            <person name="Harris B."/>
            <person name="Atkin R."/>
            <person name="Doggett J."/>
            <person name="Mayes R."/>
            <person name="Keating L."/>
            <person name="Wheeler P.R."/>
            <person name="Parkhill J."/>
            <person name="Barrell B.G."/>
            <person name="Cole S.T."/>
            <person name="Gordon S.V."/>
            <person name="Hewinson R.G."/>
        </authorList>
    </citation>
    <scope>NUCLEOTIDE SEQUENCE [LARGE SCALE GENOMIC DNA]</scope>
    <source>
        <strain>ATCC BAA-935 / AF2122/97</strain>
    </source>
</reference>
<reference key="2">
    <citation type="journal article" date="2017" name="Genome Announc.">
        <title>Updated reference genome sequence and annotation of Mycobacterium bovis AF2122/97.</title>
        <authorList>
            <person name="Malone K.M."/>
            <person name="Farrell D."/>
            <person name="Stuber T.P."/>
            <person name="Schubert O.T."/>
            <person name="Aebersold R."/>
            <person name="Robbe-Austerman S."/>
            <person name="Gordon S.V."/>
        </authorList>
    </citation>
    <scope>NUCLEOTIDE SEQUENCE [LARGE SCALE GENOMIC DNA]</scope>
    <scope>GENOME REANNOTATION</scope>
    <source>
        <strain>ATCC BAA-935 / AF2122/97</strain>
    </source>
</reference>
<feature type="chain" id="PRO_0000103670" description="Acyl carrier protein BQ2027_MB0103">
    <location>
        <begin position="1"/>
        <end position="78"/>
    </location>
</feature>
<feature type="domain" description="Carrier" evidence="2">
    <location>
        <begin position="1"/>
        <end position="78"/>
    </location>
</feature>
<feature type="modified residue" description="O-(pantetheine 4'-phosphoryl)serine" evidence="2">
    <location>
        <position position="35"/>
    </location>
</feature>